<dbReference type="EMBL" id="L25667">
    <property type="protein sequence ID" value="AAA27679.1"/>
    <property type="molecule type" value="Genomic_DNA"/>
</dbReference>
<dbReference type="EMBL" id="BX936399">
    <property type="protein sequence ID" value="CAF25415.1"/>
    <property type="molecule type" value="Genomic_DNA"/>
</dbReference>
<dbReference type="RefSeq" id="WP_002212945.1">
    <property type="nucleotide sequence ID" value="NZ_CP009711.1"/>
</dbReference>
<dbReference type="SMR" id="P69983"/>
<dbReference type="GeneID" id="31412293"/>
<dbReference type="KEGG" id="ypo:BZ17_4262"/>
<dbReference type="KEGG" id="yps:pYV0072"/>
<dbReference type="PATRIC" id="fig|273123.14.peg.4498"/>
<dbReference type="Proteomes" id="UP000001011">
    <property type="component" value="Plasmid pYV"/>
</dbReference>
<dbReference type="GO" id="GO:0005886">
    <property type="term" value="C:plasma membrane"/>
    <property type="evidence" value="ECO:0007669"/>
    <property type="project" value="UniProtKB-SubCell"/>
</dbReference>
<dbReference type="GO" id="GO:0009306">
    <property type="term" value="P:protein secretion"/>
    <property type="evidence" value="ECO:0007669"/>
    <property type="project" value="InterPro"/>
</dbReference>
<dbReference type="InterPro" id="IPR002191">
    <property type="entry name" value="Bac_export_3"/>
</dbReference>
<dbReference type="InterPro" id="IPR006306">
    <property type="entry name" value="T3SS_HrpO"/>
</dbReference>
<dbReference type="NCBIfam" id="TIGR01403">
    <property type="entry name" value="fliQ_rel_III"/>
    <property type="match status" value="1"/>
</dbReference>
<dbReference type="PANTHER" id="PTHR34040">
    <property type="entry name" value="FLAGELLAR BIOSYNTHETIC PROTEIN FLIQ"/>
    <property type="match status" value="1"/>
</dbReference>
<dbReference type="PANTHER" id="PTHR34040:SF7">
    <property type="entry name" value="SURFACE PRESENTATION OF ANTIGENS PROTEIN SPAQ"/>
    <property type="match status" value="1"/>
</dbReference>
<dbReference type="Pfam" id="PF01313">
    <property type="entry name" value="Bac_export_3"/>
    <property type="match status" value="1"/>
</dbReference>
<dbReference type="PIRSF" id="PIRSF004669">
    <property type="entry name" value="FliQ"/>
    <property type="match status" value="1"/>
</dbReference>
<dbReference type="PRINTS" id="PR00952">
    <property type="entry name" value="TYPE3IMQPROT"/>
</dbReference>
<feature type="chain" id="PRO_0000129114" description="Yop proteins translocation protein S">
    <location>
        <begin position="1"/>
        <end position="88"/>
    </location>
</feature>
<feature type="transmembrane region" description="Helical" evidence="1">
    <location>
        <begin position="15"/>
        <end position="35"/>
    </location>
</feature>
<feature type="transmembrane region" description="Helical" evidence="1">
    <location>
        <begin position="49"/>
        <end position="69"/>
    </location>
</feature>
<protein>
    <recommendedName>
        <fullName>Yop proteins translocation protein S</fullName>
    </recommendedName>
</protein>
<gene>
    <name type="primary">yscS</name>
    <name type="ordered locus">pYV0072</name>
</gene>
<comment type="function">
    <text>Component of the Yop secretion machinery.</text>
</comment>
<comment type="subcellular location">
    <subcellularLocation>
        <location evidence="2">Cell membrane</location>
        <topology evidence="2">Multi-pass membrane protein</topology>
    </subcellularLocation>
</comment>
<comment type="similarity">
    <text evidence="2">Belongs to the FliQ/MopD/SpaQ family.</text>
</comment>
<geneLocation type="plasmid">
    <name>pIB1</name>
</geneLocation>
<geneLocation type="plasmid">
    <name>pYV</name>
</geneLocation>
<keyword id="KW-1003">Cell membrane</keyword>
<keyword id="KW-0472">Membrane</keyword>
<keyword id="KW-0614">Plasmid</keyword>
<keyword id="KW-0653">Protein transport</keyword>
<keyword id="KW-0812">Transmembrane</keyword>
<keyword id="KW-1133">Transmembrane helix</keyword>
<keyword id="KW-0813">Transport</keyword>
<keyword id="KW-0843">Virulence</keyword>
<accession>P69983</accession>
<accession>P40298</accession>
<accession>P42715</accession>
<accession>Q663J4</accession>
<reference key="1">
    <citation type="journal article" date="1994" name="J. Bacteriol.">
        <title>The lcrB (yscN/U) gene cluster of Yersinia pseudotuberculosis is involved in Yop secretion and shows high homology to the spa gene clusters of Shigella flexneri and Salmonella typhimurium.</title>
        <authorList>
            <person name="Bergman T."/>
            <person name="Erickson K."/>
            <person name="Galyov E."/>
            <person name="Persson C."/>
            <person name="Wolf-Watz H."/>
        </authorList>
    </citation>
    <scope>NUCLEOTIDE SEQUENCE [GENOMIC DNA]</scope>
    <source>
        <strain>YPIII / Serotype O:3</strain>
        <plasmid>pIB1</plasmid>
    </source>
</reference>
<reference key="2">
    <citation type="journal article" date="2004" name="Proc. Natl. Acad. Sci. U.S.A.">
        <title>Insights into the evolution of Yersinia pestis through whole-genome comparison with Yersinia pseudotuberculosis.</title>
        <authorList>
            <person name="Chain P.S.G."/>
            <person name="Carniel E."/>
            <person name="Larimer F.W."/>
            <person name="Lamerdin J."/>
            <person name="Stoutland P.O."/>
            <person name="Regala W.M."/>
            <person name="Georgescu A.M."/>
            <person name="Vergez L.M."/>
            <person name="Land M.L."/>
            <person name="Motin V.L."/>
            <person name="Brubaker R.R."/>
            <person name="Fowler J."/>
            <person name="Hinnebusch J."/>
            <person name="Marceau M."/>
            <person name="Medigue C."/>
            <person name="Simonet M."/>
            <person name="Chenal-Francisque V."/>
            <person name="Souza B."/>
            <person name="Dacheux D."/>
            <person name="Elliott J.M."/>
            <person name="Derbise A."/>
            <person name="Hauser L.J."/>
            <person name="Garcia E."/>
        </authorList>
    </citation>
    <scope>NUCLEOTIDE SEQUENCE [LARGE SCALE GENOMIC DNA]</scope>
    <source>
        <strain>IP32953</strain>
        <plasmid>pYV</plasmid>
    </source>
</reference>
<name>YSCS_YERPS</name>
<organism>
    <name type="scientific">Yersinia pseudotuberculosis serotype I (strain IP32953)</name>
    <dbReference type="NCBI Taxonomy" id="273123"/>
    <lineage>
        <taxon>Bacteria</taxon>
        <taxon>Pseudomonadati</taxon>
        <taxon>Pseudomonadota</taxon>
        <taxon>Gammaproteobacteria</taxon>
        <taxon>Enterobacterales</taxon>
        <taxon>Yersiniaceae</taxon>
        <taxon>Yersinia</taxon>
    </lineage>
</organism>
<evidence type="ECO:0000255" key="1"/>
<evidence type="ECO:0000305" key="2"/>
<proteinExistence type="inferred from homology"/>
<sequence length="88" mass="9566">MSQGDIIHFTSQALWLVLVLSMPPVLVAAVVGTLVSLVQALTQIQEQTLGFVIKLIAVVVTLFATASWLGNELHSFAEMTMMKIQGIR</sequence>